<evidence type="ECO:0000255" key="1">
    <source>
        <dbReference type="HAMAP-Rule" id="MF_00508"/>
    </source>
</evidence>
<evidence type="ECO:0000305" key="2"/>
<keyword id="KW-1185">Reference proteome</keyword>
<keyword id="KW-0687">Ribonucleoprotein</keyword>
<keyword id="KW-0689">Ribosomal protein</keyword>
<dbReference type="EMBL" id="CP000477">
    <property type="protein sequence ID" value="ABK14611.1"/>
    <property type="molecule type" value="Genomic_DNA"/>
</dbReference>
<dbReference type="RefSeq" id="WP_011696007.1">
    <property type="nucleotide sequence ID" value="NC_008553.1"/>
</dbReference>
<dbReference type="SMR" id="A0B7D7"/>
<dbReference type="STRING" id="349307.Mthe_0822"/>
<dbReference type="GeneID" id="4462965"/>
<dbReference type="KEGG" id="mtp:Mthe_0822"/>
<dbReference type="HOGENOM" id="CLU_122625_0_1_2"/>
<dbReference type="OrthoDB" id="371736at2157"/>
<dbReference type="Proteomes" id="UP000000674">
    <property type="component" value="Chromosome"/>
</dbReference>
<dbReference type="GO" id="GO:0015935">
    <property type="term" value="C:small ribosomal subunit"/>
    <property type="evidence" value="ECO:0007669"/>
    <property type="project" value="InterPro"/>
</dbReference>
<dbReference type="GO" id="GO:0003735">
    <property type="term" value="F:structural constituent of ribosome"/>
    <property type="evidence" value="ECO:0007669"/>
    <property type="project" value="InterPro"/>
</dbReference>
<dbReference type="GO" id="GO:0000049">
    <property type="term" value="F:tRNA binding"/>
    <property type="evidence" value="ECO:0007669"/>
    <property type="project" value="UniProtKB-UniRule"/>
</dbReference>
<dbReference type="GO" id="GO:0006412">
    <property type="term" value="P:translation"/>
    <property type="evidence" value="ECO:0007669"/>
    <property type="project" value="UniProtKB-UniRule"/>
</dbReference>
<dbReference type="FunFam" id="3.30.70.600:FF:000004">
    <property type="entry name" value="30S ribosomal protein S10"/>
    <property type="match status" value="1"/>
</dbReference>
<dbReference type="Gene3D" id="3.30.70.600">
    <property type="entry name" value="Ribosomal protein S10 domain"/>
    <property type="match status" value="1"/>
</dbReference>
<dbReference type="HAMAP" id="MF_00508">
    <property type="entry name" value="Ribosomal_uS10"/>
    <property type="match status" value="1"/>
</dbReference>
<dbReference type="InterPro" id="IPR001848">
    <property type="entry name" value="Ribosomal_uS10"/>
</dbReference>
<dbReference type="InterPro" id="IPR018268">
    <property type="entry name" value="Ribosomal_uS10_CS"/>
</dbReference>
<dbReference type="InterPro" id="IPR027486">
    <property type="entry name" value="Ribosomal_uS10_dom"/>
</dbReference>
<dbReference type="InterPro" id="IPR036838">
    <property type="entry name" value="Ribosomal_uS10_dom_sf"/>
</dbReference>
<dbReference type="InterPro" id="IPR005729">
    <property type="entry name" value="Ribosomal_uS10_euk/arc"/>
</dbReference>
<dbReference type="NCBIfam" id="TIGR01046">
    <property type="entry name" value="uS10_euk_arch"/>
    <property type="match status" value="1"/>
</dbReference>
<dbReference type="PANTHER" id="PTHR11700">
    <property type="entry name" value="30S RIBOSOMAL PROTEIN S10 FAMILY MEMBER"/>
    <property type="match status" value="1"/>
</dbReference>
<dbReference type="Pfam" id="PF00338">
    <property type="entry name" value="Ribosomal_S10"/>
    <property type="match status" value="1"/>
</dbReference>
<dbReference type="PRINTS" id="PR00971">
    <property type="entry name" value="RIBOSOMALS10"/>
</dbReference>
<dbReference type="SMART" id="SM01403">
    <property type="entry name" value="Ribosomal_S10"/>
    <property type="match status" value="1"/>
</dbReference>
<dbReference type="SUPFAM" id="SSF54999">
    <property type="entry name" value="Ribosomal protein S10"/>
    <property type="match status" value="1"/>
</dbReference>
<dbReference type="PROSITE" id="PS00361">
    <property type="entry name" value="RIBOSOMAL_S10"/>
    <property type="match status" value="1"/>
</dbReference>
<accession>A0B7D7</accession>
<protein>
    <recommendedName>
        <fullName evidence="1">Small ribosomal subunit protein uS10</fullName>
    </recommendedName>
    <alternativeName>
        <fullName evidence="2">30S ribosomal protein S10</fullName>
    </alternativeName>
</protein>
<feature type="chain" id="PRO_1000060860" description="Small ribosomal subunit protein uS10">
    <location>
        <begin position="1"/>
        <end position="102"/>
    </location>
</feature>
<proteinExistence type="inferred from homology"/>
<comment type="function">
    <text evidence="1">Involved in the binding of tRNA to the ribosomes.</text>
</comment>
<comment type="subunit">
    <text evidence="1">Part of the 30S ribosomal subunit.</text>
</comment>
<comment type="similarity">
    <text evidence="1">Belongs to the universal ribosomal protein uS10 family.</text>
</comment>
<organism>
    <name type="scientific">Methanothrix thermoacetophila (strain DSM 6194 / JCM 14653 / NBRC 101360 / PT)</name>
    <name type="common">Methanosaeta thermophila</name>
    <dbReference type="NCBI Taxonomy" id="349307"/>
    <lineage>
        <taxon>Archaea</taxon>
        <taxon>Methanobacteriati</taxon>
        <taxon>Methanobacteriota</taxon>
        <taxon>Stenosarchaea group</taxon>
        <taxon>Methanomicrobia</taxon>
        <taxon>Methanotrichales</taxon>
        <taxon>Methanotrichaceae</taxon>
        <taxon>Methanothrix</taxon>
    </lineage>
</organism>
<gene>
    <name evidence="1" type="primary">rps10</name>
    <name type="ordered locus">Mthe_0822</name>
</gene>
<sequence length="102" mass="11544">MQKARIRLSGTNPATLDEICNQVRGIAQRTGVHMAGPIPLPTKRLVVPCRKSPDGEGSATWDHWEMRVHKRLIDLDADERALRQLMRIQVPKNVNIEIVLES</sequence>
<name>RS10_METTP</name>
<reference key="1">
    <citation type="submission" date="2006-10" db="EMBL/GenBank/DDBJ databases">
        <title>Complete sequence of Methanosaeta thermophila PT.</title>
        <authorList>
            <consortium name="US DOE Joint Genome Institute"/>
            <person name="Copeland A."/>
            <person name="Lucas S."/>
            <person name="Lapidus A."/>
            <person name="Barry K."/>
            <person name="Detter J.C."/>
            <person name="Glavina del Rio T."/>
            <person name="Hammon N."/>
            <person name="Israni S."/>
            <person name="Pitluck S."/>
            <person name="Chain P."/>
            <person name="Malfatti S."/>
            <person name="Shin M."/>
            <person name="Vergez L."/>
            <person name="Schmutz J."/>
            <person name="Larimer F."/>
            <person name="Land M."/>
            <person name="Hauser L."/>
            <person name="Kyrpides N."/>
            <person name="Kim E."/>
            <person name="Smith K.S."/>
            <person name="Ingram-Smith C."/>
            <person name="Richardson P."/>
        </authorList>
    </citation>
    <scope>NUCLEOTIDE SEQUENCE [LARGE SCALE GENOMIC DNA]</scope>
    <source>
        <strain>DSM 6194 / JCM 14653 / NBRC 101360 / PT</strain>
    </source>
</reference>